<keyword id="KW-0488">Methylation</keyword>
<keyword id="KW-1185">Reference proteome</keyword>
<keyword id="KW-0687">Ribonucleoprotein</keyword>
<keyword id="KW-0689">Ribosomal protein</keyword>
<keyword id="KW-0694">RNA-binding</keyword>
<keyword id="KW-0699">rRNA-binding</keyword>
<keyword id="KW-0820">tRNA-binding</keyword>
<name>RS12_METSB</name>
<dbReference type="EMBL" id="CP001280">
    <property type="protein sequence ID" value="ACK49557.1"/>
    <property type="molecule type" value="Genomic_DNA"/>
</dbReference>
<dbReference type="RefSeq" id="WP_012589627.1">
    <property type="nucleotide sequence ID" value="NC_011666.1"/>
</dbReference>
<dbReference type="SMR" id="B8ELG8"/>
<dbReference type="STRING" id="395965.Msil_0585"/>
<dbReference type="KEGG" id="msl:Msil_0585"/>
<dbReference type="eggNOG" id="COG0048">
    <property type="taxonomic scope" value="Bacteria"/>
</dbReference>
<dbReference type="HOGENOM" id="CLU_104295_1_2_5"/>
<dbReference type="OrthoDB" id="9802366at2"/>
<dbReference type="Proteomes" id="UP000002257">
    <property type="component" value="Chromosome"/>
</dbReference>
<dbReference type="GO" id="GO:0015935">
    <property type="term" value="C:small ribosomal subunit"/>
    <property type="evidence" value="ECO:0007669"/>
    <property type="project" value="InterPro"/>
</dbReference>
<dbReference type="GO" id="GO:0019843">
    <property type="term" value="F:rRNA binding"/>
    <property type="evidence" value="ECO:0007669"/>
    <property type="project" value="UniProtKB-UniRule"/>
</dbReference>
<dbReference type="GO" id="GO:0003735">
    <property type="term" value="F:structural constituent of ribosome"/>
    <property type="evidence" value="ECO:0007669"/>
    <property type="project" value="InterPro"/>
</dbReference>
<dbReference type="GO" id="GO:0000049">
    <property type="term" value="F:tRNA binding"/>
    <property type="evidence" value="ECO:0007669"/>
    <property type="project" value="UniProtKB-UniRule"/>
</dbReference>
<dbReference type="GO" id="GO:0006412">
    <property type="term" value="P:translation"/>
    <property type="evidence" value="ECO:0007669"/>
    <property type="project" value="UniProtKB-UniRule"/>
</dbReference>
<dbReference type="CDD" id="cd03368">
    <property type="entry name" value="Ribosomal_S12"/>
    <property type="match status" value="1"/>
</dbReference>
<dbReference type="FunFam" id="2.40.50.140:FF:000001">
    <property type="entry name" value="30S ribosomal protein S12"/>
    <property type="match status" value="1"/>
</dbReference>
<dbReference type="Gene3D" id="2.40.50.140">
    <property type="entry name" value="Nucleic acid-binding proteins"/>
    <property type="match status" value="1"/>
</dbReference>
<dbReference type="HAMAP" id="MF_00403_B">
    <property type="entry name" value="Ribosomal_uS12_B"/>
    <property type="match status" value="1"/>
</dbReference>
<dbReference type="InterPro" id="IPR012340">
    <property type="entry name" value="NA-bd_OB-fold"/>
</dbReference>
<dbReference type="InterPro" id="IPR006032">
    <property type="entry name" value="Ribosomal_uS12"/>
</dbReference>
<dbReference type="InterPro" id="IPR005679">
    <property type="entry name" value="Ribosomal_uS12_bac"/>
</dbReference>
<dbReference type="NCBIfam" id="TIGR00981">
    <property type="entry name" value="rpsL_bact"/>
    <property type="match status" value="1"/>
</dbReference>
<dbReference type="PANTHER" id="PTHR11652">
    <property type="entry name" value="30S RIBOSOMAL PROTEIN S12 FAMILY MEMBER"/>
    <property type="match status" value="1"/>
</dbReference>
<dbReference type="Pfam" id="PF00164">
    <property type="entry name" value="Ribosom_S12_S23"/>
    <property type="match status" value="1"/>
</dbReference>
<dbReference type="PIRSF" id="PIRSF002133">
    <property type="entry name" value="Ribosomal_S12/S23"/>
    <property type="match status" value="1"/>
</dbReference>
<dbReference type="PRINTS" id="PR01034">
    <property type="entry name" value="RIBOSOMALS12"/>
</dbReference>
<dbReference type="SUPFAM" id="SSF50249">
    <property type="entry name" value="Nucleic acid-binding proteins"/>
    <property type="match status" value="1"/>
</dbReference>
<dbReference type="PROSITE" id="PS00055">
    <property type="entry name" value="RIBOSOMAL_S12"/>
    <property type="match status" value="1"/>
</dbReference>
<sequence length="123" mass="14025">MPTISQLIRKPRQEKTYREKARHLGASPQKRGVCTRVYTTTPKKPNSALRKVAKVRLTNGFEVIGYIPGEGHNLQEHSVVMIRGGRVKDLPGVRYHILRGVLDTQGVKNRKQRRSKYGAKRPK</sequence>
<reference key="1">
    <citation type="journal article" date="2010" name="J. Bacteriol.">
        <title>Complete genome sequence of the aerobic facultative methanotroph Methylocella silvestris BL2.</title>
        <authorList>
            <person name="Chen Y."/>
            <person name="Crombie A."/>
            <person name="Rahman M.T."/>
            <person name="Dedysh S.N."/>
            <person name="Liesack W."/>
            <person name="Stott M.B."/>
            <person name="Alam M."/>
            <person name="Theisen A.R."/>
            <person name="Murrell J.C."/>
            <person name="Dunfield P.F."/>
        </authorList>
    </citation>
    <scope>NUCLEOTIDE SEQUENCE [LARGE SCALE GENOMIC DNA]</scope>
    <source>
        <strain>DSM 15510 / CIP 108128 / LMG 27833 / NCIMB 13906 / BL2</strain>
    </source>
</reference>
<organism>
    <name type="scientific">Methylocella silvestris (strain DSM 15510 / CIP 108128 / LMG 27833 / NCIMB 13906 / BL2)</name>
    <dbReference type="NCBI Taxonomy" id="395965"/>
    <lineage>
        <taxon>Bacteria</taxon>
        <taxon>Pseudomonadati</taxon>
        <taxon>Pseudomonadota</taxon>
        <taxon>Alphaproteobacteria</taxon>
        <taxon>Hyphomicrobiales</taxon>
        <taxon>Beijerinckiaceae</taxon>
        <taxon>Methylocella</taxon>
    </lineage>
</organism>
<protein>
    <recommendedName>
        <fullName evidence="2">Small ribosomal subunit protein uS12</fullName>
    </recommendedName>
    <alternativeName>
        <fullName evidence="4">30S ribosomal protein S12</fullName>
    </alternativeName>
</protein>
<proteinExistence type="inferred from homology"/>
<feature type="chain" id="PRO_1000134644" description="Small ribosomal subunit protein uS12">
    <location>
        <begin position="1"/>
        <end position="123"/>
    </location>
</feature>
<feature type="region of interest" description="Disordered" evidence="3">
    <location>
        <begin position="11"/>
        <end position="32"/>
    </location>
</feature>
<feature type="modified residue" description="3-methylthioaspartic acid" evidence="1">
    <location>
        <position position="89"/>
    </location>
</feature>
<comment type="function">
    <text evidence="2">With S4 and S5 plays an important role in translational accuracy.</text>
</comment>
<comment type="function">
    <text evidence="2">Interacts with and stabilizes bases of the 16S rRNA that are involved in tRNA selection in the A site and with the mRNA backbone. Located at the interface of the 30S and 50S subunits, it traverses the body of the 30S subunit contacting proteins on the other side and probably holding the rRNA structure together. The combined cluster of proteins S8, S12 and S17 appears to hold together the shoulder and platform of the 30S subunit.</text>
</comment>
<comment type="subunit">
    <text evidence="2">Part of the 30S ribosomal subunit. Contacts proteins S8 and S17. May interact with IF1 in the 30S initiation complex.</text>
</comment>
<comment type="similarity">
    <text evidence="2">Belongs to the universal ribosomal protein uS12 family.</text>
</comment>
<gene>
    <name evidence="2" type="primary">rpsL</name>
    <name type="ordered locus">Msil_0585</name>
</gene>
<accession>B8ELG8</accession>
<evidence type="ECO:0000250" key="1"/>
<evidence type="ECO:0000255" key="2">
    <source>
        <dbReference type="HAMAP-Rule" id="MF_00403"/>
    </source>
</evidence>
<evidence type="ECO:0000256" key="3">
    <source>
        <dbReference type="SAM" id="MobiDB-lite"/>
    </source>
</evidence>
<evidence type="ECO:0000305" key="4"/>